<reference key="1">
    <citation type="journal article" date="1988" name="Gen. Comp. Endocrinol.">
        <title>Isolation and structural characterization of insulin from the holocephalan fish, Chimaera monstrosa (rabbit fish).</title>
        <authorList>
            <person name="Conlon J.M."/>
            <person name="Andrews P.C."/>
            <person name="Falkmer S."/>
            <person name="Thim L."/>
        </authorList>
    </citation>
    <scope>PROTEIN SEQUENCE</scope>
</reference>
<dbReference type="PIR" id="S06420">
    <property type="entry name" value="INRQ"/>
</dbReference>
<dbReference type="SMR" id="P68991"/>
<dbReference type="GO" id="GO:0005615">
    <property type="term" value="C:extracellular space"/>
    <property type="evidence" value="ECO:0007669"/>
    <property type="project" value="TreeGrafter"/>
</dbReference>
<dbReference type="GO" id="GO:0005179">
    <property type="term" value="F:hormone activity"/>
    <property type="evidence" value="ECO:0007669"/>
    <property type="project" value="UniProtKB-KW"/>
</dbReference>
<dbReference type="GO" id="GO:0006006">
    <property type="term" value="P:glucose metabolic process"/>
    <property type="evidence" value="ECO:0007669"/>
    <property type="project" value="UniProtKB-KW"/>
</dbReference>
<dbReference type="CDD" id="cd04367">
    <property type="entry name" value="IlGF_insulin_like"/>
    <property type="match status" value="1"/>
</dbReference>
<dbReference type="Gene3D" id="1.10.100.10">
    <property type="entry name" value="Insulin-like"/>
    <property type="match status" value="1"/>
</dbReference>
<dbReference type="InterPro" id="IPR004825">
    <property type="entry name" value="Insulin"/>
</dbReference>
<dbReference type="InterPro" id="IPR016179">
    <property type="entry name" value="Insulin-like"/>
</dbReference>
<dbReference type="InterPro" id="IPR036438">
    <property type="entry name" value="Insulin-like_sf"/>
</dbReference>
<dbReference type="InterPro" id="IPR022353">
    <property type="entry name" value="Insulin_CS"/>
</dbReference>
<dbReference type="InterPro" id="IPR022352">
    <property type="entry name" value="Insulin_family"/>
</dbReference>
<dbReference type="PANTHER" id="PTHR11454:SF9">
    <property type="entry name" value="INSULIN"/>
    <property type="match status" value="1"/>
</dbReference>
<dbReference type="PANTHER" id="PTHR11454">
    <property type="entry name" value="INSULIN/INSULIN GROWTH FACTOR"/>
    <property type="match status" value="1"/>
</dbReference>
<dbReference type="Pfam" id="PF00049">
    <property type="entry name" value="Insulin"/>
    <property type="match status" value="2"/>
</dbReference>
<dbReference type="PRINTS" id="PR00277">
    <property type="entry name" value="INSULIN"/>
</dbReference>
<dbReference type="PRINTS" id="PR00276">
    <property type="entry name" value="INSULINFAMLY"/>
</dbReference>
<dbReference type="SMART" id="SM00078">
    <property type="entry name" value="IlGF"/>
    <property type="match status" value="1"/>
</dbReference>
<dbReference type="SUPFAM" id="SSF56994">
    <property type="entry name" value="Insulin-like"/>
    <property type="match status" value="1"/>
</dbReference>
<dbReference type="PROSITE" id="PS00262">
    <property type="entry name" value="INSULIN"/>
    <property type="match status" value="1"/>
</dbReference>
<gene>
    <name type="primary">ins</name>
</gene>
<sequence>VPTQRLCGSHLVDALYFVCGERGFFYSPKPIRELEPLLGIVEQCCHNTCSLANLEGYCN</sequence>
<proteinExistence type="evidence at protein level"/>
<protein>
    <recommendedName>
        <fullName>Insulin</fullName>
    </recommendedName>
    <component>
        <recommendedName>
            <fullName>Insulin B chain</fullName>
        </recommendedName>
    </component>
    <component>
        <recommendedName>
            <fullName>Insulin A chain</fullName>
        </recommendedName>
    </component>
</protein>
<comment type="function">
    <text>Insulin decreases blood glucose concentration. It increases cell permeability to monosaccharides, amino acids and fatty acids. It accelerates glycolysis, the pentose phosphate cycle, and glycogen synthesis in liver.</text>
</comment>
<comment type="subunit">
    <text>Heterodimer of a B chain and an A chain linked by two disulfide bonds.</text>
</comment>
<comment type="subcellular location">
    <subcellularLocation>
        <location>Secreted</location>
    </subcellularLocation>
</comment>
<comment type="miscellaneous">
    <text>Due to a substitution of the Arg in position 31 by an Ile, this insulin B chain is longer than most other B chains and is processed differently.</text>
</comment>
<comment type="similarity">
    <text evidence="1">Belongs to the insulin family.</text>
</comment>
<feature type="peptide" id="PRO_0000015793" description="Insulin B chain">
    <location>
        <begin position="1"/>
        <end position="38"/>
    </location>
</feature>
<feature type="peptide" id="PRO_0000015794" description="Insulin A chain">
    <location>
        <begin position="39"/>
        <end position="59"/>
    </location>
</feature>
<feature type="disulfide bond" description="Interchain (between B and A chains)">
    <location>
        <begin position="7"/>
        <end position="45"/>
    </location>
</feature>
<feature type="disulfide bond" description="Interchain (between B and A chains)">
    <location>
        <begin position="19"/>
        <end position="58"/>
    </location>
</feature>
<feature type="disulfide bond">
    <location>
        <begin position="44"/>
        <end position="49"/>
    </location>
</feature>
<feature type="non-consecutive residues" evidence="1">
    <location>
        <begin position="38"/>
        <end position="39"/>
    </location>
</feature>
<keyword id="KW-0119">Carbohydrate metabolism</keyword>
<keyword id="KW-0903">Direct protein sequencing</keyword>
<keyword id="KW-1015">Disulfide bond</keyword>
<keyword id="KW-0313">Glucose metabolism</keyword>
<keyword id="KW-0372">Hormone</keyword>
<keyword id="KW-0964">Secreted</keyword>
<accession>P68991</accession>
<accession>P09536</accession>
<evidence type="ECO:0000305" key="1"/>
<organism>
    <name type="scientific">Chimaera monstrosa</name>
    <name type="common">Rabbit fish</name>
    <dbReference type="NCBI Taxonomy" id="7871"/>
    <lineage>
        <taxon>Eukaryota</taxon>
        <taxon>Metazoa</taxon>
        <taxon>Chordata</taxon>
        <taxon>Craniata</taxon>
        <taxon>Vertebrata</taxon>
        <taxon>Chondrichthyes</taxon>
        <taxon>Holocephali</taxon>
        <taxon>Chimaeriformes</taxon>
        <taxon>Chimaeridae</taxon>
        <taxon>Chimaera</taxon>
    </lineage>
</organism>
<name>INS_CHIMO</name>